<sequence length="250" mass="28605">MNLKITINQQASISEKLIIANLEQLLIFRDNTFNKIDCDQQITLKDAVQISQILNDQGVLNYEGEINEQITTYLEACGLYSQGQGQFIKRTLQTKKINIPQQDFNNCYGKYDYIEQKFQNQINFFKQVDLKGNQETIDENELLNDGVEVKQVESCASKPRACANCTCGRKEMEEKQDKEQLLEQLKNNSVKGCGSCYLGDAFRCANCPFRGLPAFKDGEQVKVLQDDVFLKEKEETDQIKLENGKVKLMI</sequence>
<evidence type="ECO:0000255" key="1">
    <source>
        <dbReference type="HAMAP-Rule" id="MF_03115"/>
    </source>
</evidence>
<reference key="1">
    <citation type="journal article" date="2006" name="Nature">
        <title>Global trends of whole-genome duplications revealed by the ciliate Paramecium tetraurelia.</title>
        <authorList>
            <person name="Aury J.-M."/>
            <person name="Jaillon O."/>
            <person name="Duret L."/>
            <person name="Noel B."/>
            <person name="Jubin C."/>
            <person name="Porcel B.M."/>
            <person name="Segurens B."/>
            <person name="Daubin V."/>
            <person name="Anthouard V."/>
            <person name="Aiach N."/>
            <person name="Arnaiz O."/>
            <person name="Billaut A."/>
            <person name="Beisson J."/>
            <person name="Blanc I."/>
            <person name="Bouhouche K."/>
            <person name="Camara F."/>
            <person name="Duharcourt S."/>
            <person name="Guigo R."/>
            <person name="Gogendeau D."/>
            <person name="Katinka M."/>
            <person name="Keller A.-M."/>
            <person name="Kissmehl R."/>
            <person name="Klotz C."/>
            <person name="Koll F."/>
            <person name="Le Mouel A."/>
            <person name="Lepere G."/>
            <person name="Malinsky S."/>
            <person name="Nowacki M."/>
            <person name="Nowak J.K."/>
            <person name="Plattner H."/>
            <person name="Poulain J."/>
            <person name="Ruiz F."/>
            <person name="Serrano V."/>
            <person name="Zagulski M."/>
            <person name="Dessen P."/>
            <person name="Betermier M."/>
            <person name="Weissenbach J."/>
            <person name="Scarpelli C."/>
            <person name="Schaechter V."/>
            <person name="Sperling L."/>
            <person name="Meyer E."/>
            <person name="Cohen J."/>
            <person name="Wincker P."/>
        </authorList>
    </citation>
    <scope>NUCLEOTIDE SEQUENCE [LARGE SCALE GENOMIC DNA]</scope>
    <source>
        <strain>Stock d4-2</strain>
    </source>
</reference>
<organism>
    <name type="scientific">Paramecium tetraurelia</name>
    <dbReference type="NCBI Taxonomy" id="5888"/>
    <lineage>
        <taxon>Eukaryota</taxon>
        <taxon>Sar</taxon>
        <taxon>Alveolata</taxon>
        <taxon>Ciliophora</taxon>
        <taxon>Intramacronucleata</taxon>
        <taxon>Oligohymenophorea</taxon>
        <taxon>Peniculida</taxon>
        <taxon>Parameciidae</taxon>
        <taxon>Paramecium</taxon>
    </lineage>
</organism>
<dbReference type="EMBL" id="CT868085">
    <property type="protein sequence ID" value="CAK70690.1"/>
    <property type="molecule type" value="Genomic_DNA"/>
</dbReference>
<dbReference type="RefSeq" id="XP_001438087.1">
    <property type="nucleotide sequence ID" value="XM_001438050.2"/>
</dbReference>
<dbReference type="SMR" id="A0CIS3"/>
<dbReference type="STRING" id="5888.A0CIS3"/>
<dbReference type="EnsemblProtists" id="CAK70690">
    <property type="protein sequence ID" value="CAK70690"/>
    <property type="gene ID" value="GSPATT00007825001"/>
</dbReference>
<dbReference type="GeneID" id="5023872"/>
<dbReference type="KEGG" id="ptm:GSPATT00007825001"/>
<dbReference type="eggNOG" id="KOG4020">
    <property type="taxonomic scope" value="Eukaryota"/>
</dbReference>
<dbReference type="HOGENOM" id="CLU_929001_0_0_1"/>
<dbReference type="InParanoid" id="A0CIS3"/>
<dbReference type="OMA" id="IFRDNTF"/>
<dbReference type="OrthoDB" id="311633at2759"/>
<dbReference type="Proteomes" id="UP000000600">
    <property type="component" value="Partially assembled WGS sequence"/>
</dbReference>
<dbReference type="GO" id="GO:0005737">
    <property type="term" value="C:cytoplasm"/>
    <property type="evidence" value="ECO:0000318"/>
    <property type="project" value="GO_Central"/>
</dbReference>
<dbReference type="GO" id="GO:0005758">
    <property type="term" value="C:mitochondrial intermembrane space"/>
    <property type="evidence" value="ECO:0007669"/>
    <property type="project" value="UniProtKB-SubCell"/>
</dbReference>
<dbReference type="GO" id="GO:0051537">
    <property type="term" value="F:2 iron, 2 sulfur cluster binding"/>
    <property type="evidence" value="ECO:0007669"/>
    <property type="project" value="UniProtKB-UniRule"/>
</dbReference>
<dbReference type="GO" id="GO:0051539">
    <property type="term" value="F:4 iron, 4 sulfur cluster binding"/>
    <property type="evidence" value="ECO:0007669"/>
    <property type="project" value="UniProtKB-KW"/>
</dbReference>
<dbReference type="GO" id="GO:0009055">
    <property type="term" value="F:electron transfer activity"/>
    <property type="evidence" value="ECO:0007669"/>
    <property type="project" value="UniProtKB-UniRule"/>
</dbReference>
<dbReference type="GO" id="GO:0046872">
    <property type="term" value="F:metal ion binding"/>
    <property type="evidence" value="ECO:0007669"/>
    <property type="project" value="UniProtKB-KW"/>
</dbReference>
<dbReference type="GO" id="GO:0016226">
    <property type="term" value="P:iron-sulfur cluster assembly"/>
    <property type="evidence" value="ECO:0000318"/>
    <property type="project" value="GO_Central"/>
</dbReference>
<dbReference type="HAMAP" id="MF_03115">
    <property type="entry name" value="Anamorsin"/>
    <property type="match status" value="1"/>
</dbReference>
<dbReference type="InterPro" id="IPR007785">
    <property type="entry name" value="Anamorsin"/>
</dbReference>
<dbReference type="InterPro" id="IPR046408">
    <property type="entry name" value="CIAPIN1"/>
</dbReference>
<dbReference type="PANTHER" id="PTHR13273">
    <property type="entry name" value="ANAMORSIN"/>
    <property type="match status" value="1"/>
</dbReference>
<dbReference type="PANTHER" id="PTHR13273:SF14">
    <property type="entry name" value="ANAMORSIN"/>
    <property type="match status" value="1"/>
</dbReference>
<dbReference type="Pfam" id="PF05093">
    <property type="entry name" value="CIAPIN1"/>
    <property type="match status" value="1"/>
</dbReference>
<accession>A0CIS3</accession>
<proteinExistence type="inferred from homology"/>
<keyword id="KW-0001">2Fe-2S</keyword>
<keyword id="KW-0004">4Fe-4S</keyword>
<keyword id="KW-0963">Cytoplasm</keyword>
<keyword id="KW-0408">Iron</keyword>
<keyword id="KW-0411">Iron-sulfur</keyword>
<keyword id="KW-0479">Metal-binding</keyword>
<keyword id="KW-0496">Mitochondrion</keyword>
<keyword id="KW-1185">Reference proteome</keyword>
<feature type="chain" id="PRO_0000392354" description="Anamorsin homolog 2">
    <location>
        <begin position="1"/>
        <end position="250"/>
    </location>
</feature>
<feature type="region of interest" description="N-terminal SAM-like domain" evidence="1">
    <location>
        <begin position="1"/>
        <end position="102"/>
    </location>
</feature>
<feature type="region of interest" description="Linker" evidence="1">
    <location>
        <begin position="102"/>
        <end position="149"/>
    </location>
</feature>
<feature type="region of interest" description="Fe-S binding site A" evidence="1">
    <location>
        <begin position="155"/>
        <end position="167"/>
    </location>
</feature>
<feature type="region of interest" description="Fe-S binding site B" evidence="1">
    <location>
        <begin position="193"/>
        <end position="207"/>
    </location>
</feature>
<feature type="short sequence motif" description="Cx2C motif 1" evidence="1">
    <location>
        <begin position="193"/>
        <end position="196"/>
    </location>
</feature>
<feature type="short sequence motif" description="Cx2C motif 2" evidence="1">
    <location>
        <begin position="204"/>
        <end position="207"/>
    </location>
</feature>
<feature type="binding site" evidence="1">
    <location>
        <position position="155"/>
    </location>
    <ligand>
        <name>[2Fe-2S] cluster</name>
        <dbReference type="ChEBI" id="CHEBI:190135"/>
    </ligand>
</feature>
<feature type="binding site" evidence="1">
    <location>
        <position position="162"/>
    </location>
    <ligand>
        <name>[2Fe-2S] cluster</name>
        <dbReference type="ChEBI" id="CHEBI:190135"/>
    </ligand>
</feature>
<feature type="binding site" evidence="1">
    <location>
        <position position="165"/>
    </location>
    <ligand>
        <name>[2Fe-2S] cluster</name>
        <dbReference type="ChEBI" id="CHEBI:190135"/>
    </ligand>
</feature>
<feature type="binding site" evidence="1">
    <location>
        <position position="167"/>
    </location>
    <ligand>
        <name>[2Fe-2S] cluster</name>
        <dbReference type="ChEBI" id="CHEBI:190135"/>
    </ligand>
</feature>
<feature type="binding site" evidence="1">
    <location>
        <position position="193"/>
    </location>
    <ligand>
        <name>[4Fe-4S] cluster</name>
        <dbReference type="ChEBI" id="CHEBI:49883"/>
    </ligand>
</feature>
<feature type="binding site" evidence="1">
    <location>
        <position position="196"/>
    </location>
    <ligand>
        <name>[4Fe-4S] cluster</name>
        <dbReference type="ChEBI" id="CHEBI:49883"/>
    </ligand>
</feature>
<feature type="binding site" evidence="1">
    <location>
        <position position="204"/>
    </location>
    <ligand>
        <name>[4Fe-4S] cluster</name>
        <dbReference type="ChEBI" id="CHEBI:49883"/>
    </ligand>
</feature>
<feature type="binding site" evidence="1">
    <location>
        <position position="207"/>
    </location>
    <ligand>
        <name>[4Fe-4S] cluster</name>
        <dbReference type="ChEBI" id="CHEBI:49883"/>
    </ligand>
</feature>
<gene>
    <name type="ORF">GSPATT00007825001</name>
</gene>
<protein>
    <recommendedName>
        <fullName evidence="1">Anamorsin homolog 2</fullName>
    </recommendedName>
    <alternativeName>
        <fullName evidence="1">Fe-S cluster assembly protein DRE2 homolog 2</fullName>
    </alternativeName>
</protein>
<name>DRE22_PARTE</name>
<comment type="function">
    <text evidence="1">Component of the cytosolic iron-sulfur (Fe-S) protein assembly (CIA) machinery. Required for the maturation of extramitochondrial Fe-S proteins. Part of an electron transfer chain functioning in an early step of cytosolic Fe-S biogenesis, facilitating the de novo assembly of a [4Fe-4S] cluster on the cytosolic Fe-S scaffold complex. Electrons are transferred from NADPH via a FAD- and FMN-containing diflavin oxidoreductase. Together with the diflavin oxidoreductase, also required for the assembly of the diferric tyrosyl radical cofactor of ribonucleotide reductase (RNR), probably by providing electrons for reduction during radical cofactor maturation in the catalytic small subunit.</text>
</comment>
<comment type="cofactor">
    <cofactor evidence="1">
        <name>[2Fe-2S] cluster</name>
        <dbReference type="ChEBI" id="CHEBI:190135"/>
    </cofactor>
</comment>
<comment type="cofactor">
    <cofactor evidence="1">
        <name>[4Fe-4S] cluster</name>
        <dbReference type="ChEBI" id="CHEBI:49883"/>
    </cofactor>
</comment>
<comment type="subunit">
    <text evidence="1">Monomer.</text>
</comment>
<comment type="subcellular location">
    <subcellularLocation>
        <location evidence="1">Cytoplasm</location>
    </subcellularLocation>
    <subcellularLocation>
        <location evidence="1">Mitochondrion intermembrane space</location>
    </subcellularLocation>
</comment>
<comment type="domain">
    <text evidence="1">The C-terminal domain binds 2 Fe-S clusters but is otherwise mostly in an intrinsically disordered conformation.</text>
</comment>
<comment type="domain">
    <text evidence="1">The N-terminal domain has structural similarity with S-adenosyl-L-methionine-dependent methyltransferases, but does not bind S-adenosyl-L-methionine. It is required for correct assembly of the 2 Fe-S clusters.</text>
</comment>
<comment type="domain">
    <text evidence="1">The twin Cx2C motifs are involved in the recognition by the mitochondrial MIA40-ERV1 disulfide relay system. The formation of 2 disulfide bonds in the Cx2C motifs through dithiol/disulfide exchange reactions effectively traps the protein in the mitochondrial intermembrane space.</text>
</comment>
<comment type="similarity">
    <text evidence="1">Belongs to the anamorsin family.</text>
</comment>